<dbReference type="EMBL" id="CP000524">
    <property type="protein sequence ID" value="ABM44500.1"/>
    <property type="molecule type" value="Genomic_DNA"/>
</dbReference>
<dbReference type="RefSeq" id="WP_005766215.1">
    <property type="nucleotide sequence ID" value="NC_008783.1"/>
</dbReference>
<dbReference type="SMR" id="A1URM7"/>
<dbReference type="STRING" id="360095.BARBAKC583_0310"/>
<dbReference type="GeneID" id="4684098"/>
<dbReference type="KEGG" id="bbk:BARBAKC583_0310"/>
<dbReference type="PATRIC" id="fig|360095.6.peg.294"/>
<dbReference type="eggNOG" id="COG0211">
    <property type="taxonomic scope" value="Bacteria"/>
</dbReference>
<dbReference type="HOGENOM" id="CLU_095424_4_1_5"/>
<dbReference type="OrthoDB" id="9803474at2"/>
<dbReference type="Proteomes" id="UP000000643">
    <property type="component" value="Chromosome"/>
</dbReference>
<dbReference type="GO" id="GO:0022625">
    <property type="term" value="C:cytosolic large ribosomal subunit"/>
    <property type="evidence" value="ECO:0007669"/>
    <property type="project" value="TreeGrafter"/>
</dbReference>
<dbReference type="GO" id="GO:0003735">
    <property type="term" value="F:structural constituent of ribosome"/>
    <property type="evidence" value="ECO:0007669"/>
    <property type="project" value="InterPro"/>
</dbReference>
<dbReference type="GO" id="GO:0006412">
    <property type="term" value="P:translation"/>
    <property type="evidence" value="ECO:0007669"/>
    <property type="project" value="UniProtKB-UniRule"/>
</dbReference>
<dbReference type="FunFam" id="2.40.50.100:FF:000020">
    <property type="entry name" value="50S ribosomal protein L27"/>
    <property type="match status" value="1"/>
</dbReference>
<dbReference type="Gene3D" id="2.40.50.100">
    <property type="match status" value="1"/>
</dbReference>
<dbReference type="HAMAP" id="MF_00539">
    <property type="entry name" value="Ribosomal_bL27"/>
    <property type="match status" value="1"/>
</dbReference>
<dbReference type="InterPro" id="IPR001684">
    <property type="entry name" value="Ribosomal_bL27"/>
</dbReference>
<dbReference type="InterPro" id="IPR018261">
    <property type="entry name" value="Ribosomal_bL27_CS"/>
</dbReference>
<dbReference type="NCBIfam" id="TIGR00062">
    <property type="entry name" value="L27"/>
    <property type="match status" value="1"/>
</dbReference>
<dbReference type="PANTHER" id="PTHR15893:SF0">
    <property type="entry name" value="LARGE RIBOSOMAL SUBUNIT PROTEIN BL27M"/>
    <property type="match status" value="1"/>
</dbReference>
<dbReference type="PANTHER" id="PTHR15893">
    <property type="entry name" value="RIBOSOMAL PROTEIN L27"/>
    <property type="match status" value="1"/>
</dbReference>
<dbReference type="Pfam" id="PF01016">
    <property type="entry name" value="Ribosomal_L27"/>
    <property type="match status" value="1"/>
</dbReference>
<dbReference type="PRINTS" id="PR00063">
    <property type="entry name" value="RIBOSOMALL27"/>
</dbReference>
<dbReference type="SUPFAM" id="SSF110324">
    <property type="entry name" value="Ribosomal L27 protein-like"/>
    <property type="match status" value="1"/>
</dbReference>
<dbReference type="PROSITE" id="PS00831">
    <property type="entry name" value="RIBOSOMAL_L27"/>
    <property type="match status" value="1"/>
</dbReference>
<protein>
    <recommendedName>
        <fullName evidence="1">Large ribosomal subunit protein bL27</fullName>
    </recommendedName>
    <alternativeName>
        <fullName evidence="3">50S ribosomal protein L27</fullName>
    </alternativeName>
</protein>
<name>RL27_BARBK</name>
<comment type="similarity">
    <text evidence="1">Belongs to the bacterial ribosomal protein bL27 family.</text>
</comment>
<organism>
    <name type="scientific">Bartonella bacilliformis (strain ATCC 35685 / KC583 / Herrer 020/F12,63)</name>
    <dbReference type="NCBI Taxonomy" id="360095"/>
    <lineage>
        <taxon>Bacteria</taxon>
        <taxon>Pseudomonadati</taxon>
        <taxon>Pseudomonadota</taxon>
        <taxon>Alphaproteobacteria</taxon>
        <taxon>Hyphomicrobiales</taxon>
        <taxon>Bartonellaceae</taxon>
        <taxon>Bartonella</taxon>
    </lineage>
</organism>
<gene>
    <name evidence="1" type="primary">rpmA</name>
    <name type="ordered locus">BARBAKC583_0310</name>
</gene>
<accession>A1URM7</accession>
<evidence type="ECO:0000255" key="1">
    <source>
        <dbReference type="HAMAP-Rule" id="MF_00539"/>
    </source>
</evidence>
<evidence type="ECO:0000256" key="2">
    <source>
        <dbReference type="SAM" id="MobiDB-lite"/>
    </source>
</evidence>
<evidence type="ECO:0000305" key="3"/>
<proteinExistence type="inferred from homology"/>
<keyword id="KW-0687">Ribonucleoprotein</keyword>
<keyword id="KW-0689">Ribosomal protein</keyword>
<reference key="1">
    <citation type="submission" date="2006-12" db="EMBL/GenBank/DDBJ databases">
        <authorList>
            <person name="Hendrix L."/>
            <person name="Mohamoud Y."/>
            <person name="Radune D."/>
            <person name="Shvartsbeyn A."/>
            <person name="Daugherty S."/>
            <person name="Dodson R."/>
            <person name="Durkin A.S."/>
            <person name="Harkins D."/>
            <person name="Huot H."/>
            <person name="Kothari S.P."/>
            <person name="Madupu R."/>
            <person name="Li J."/>
            <person name="Nelson W.C."/>
            <person name="Shrivastava S."/>
            <person name="Giglio M.G."/>
            <person name="Haft D."/>
            <person name="Selengut J."/>
            <person name="Fraser-Ligget C."/>
            <person name="Seshadri R."/>
        </authorList>
    </citation>
    <scope>NUCLEOTIDE SEQUENCE [LARGE SCALE GENOMIC DNA]</scope>
    <source>
        <strain>ATCC 35685 / KC583 / Herrer 020/F12,63</strain>
    </source>
</reference>
<sequence length="89" mass="9546">MAHKKAGGSSRNGRDSESKRLGVKKFGGEAVIAGNIIIRQRGTRWHPGENVGIGKDHTLFSLANGTVSFRTKVNNRSYVSVIPAAVEAK</sequence>
<feature type="chain" id="PRO_1000017415" description="Large ribosomal subunit protein bL27">
    <location>
        <begin position="1"/>
        <end position="89"/>
    </location>
</feature>
<feature type="region of interest" description="Disordered" evidence="2">
    <location>
        <begin position="1"/>
        <end position="20"/>
    </location>
</feature>